<reference key="1">
    <citation type="journal article" date="2002" name="Nature">
        <title>The genome sequence of Schizosaccharomyces pombe.</title>
        <authorList>
            <person name="Wood V."/>
            <person name="Gwilliam R."/>
            <person name="Rajandream M.A."/>
            <person name="Lyne M.H."/>
            <person name="Lyne R."/>
            <person name="Stewart A."/>
            <person name="Sgouros J.G."/>
            <person name="Peat N."/>
            <person name="Hayles J."/>
            <person name="Baker S.G."/>
            <person name="Basham D."/>
            <person name="Bowman S."/>
            <person name="Brooks K."/>
            <person name="Brown D."/>
            <person name="Brown S."/>
            <person name="Chillingworth T."/>
            <person name="Churcher C.M."/>
            <person name="Collins M."/>
            <person name="Connor R."/>
            <person name="Cronin A."/>
            <person name="Davis P."/>
            <person name="Feltwell T."/>
            <person name="Fraser A."/>
            <person name="Gentles S."/>
            <person name="Goble A."/>
            <person name="Hamlin N."/>
            <person name="Harris D.E."/>
            <person name="Hidalgo J."/>
            <person name="Hodgson G."/>
            <person name="Holroyd S."/>
            <person name="Hornsby T."/>
            <person name="Howarth S."/>
            <person name="Huckle E.J."/>
            <person name="Hunt S."/>
            <person name="Jagels K."/>
            <person name="James K.D."/>
            <person name="Jones L."/>
            <person name="Jones M."/>
            <person name="Leather S."/>
            <person name="McDonald S."/>
            <person name="McLean J."/>
            <person name="Mooney P."/>
            <person name="Moule S."/>
            <person name="Mungall K.L."/>
            <person name="Murphy L.D."/>
            <person name="Niblett D."/>
            <person name="Odell C."/>
            <person name="Oliver K."/>
            <person name="O'Neil S."/>
            <person name="Pearson D."/>
            <person name="Quail M.A."/>
            <person name="Rabbinowitsch E."/>
            <person name="Rutherford K.M."/>
            <person name="Rutter S."/>
            <person name="Saunders D."/>
            <person name="Seeger K."/>
            <person name="Sharp S."/>
            <person name="Skelton J."/>
            <person name="Simmonds M.N."/>
            <person name="Squares R."/>
            <person name="Squares S."/>
            <person name="Stevens K."/>
            <person name="Taylor K."/>
            <person name="Taylor R.G."/>
            <person name="Tivey A."/>
            <person name="Walsh S.V."/>
            <person name="Warren T."/>
            <person name="Whitehead S."/>
            <person name="Woodward J.R."/>
            <person name="Volckaert G."/>
            <person name="Aert R."/>
            <person name="Robben J."/>
            <person name="Grymonprez B."/>
            <person name="Weltjens I."/>
            <person name="Vanstreels E."/>
            <person name="Rieger M."/>
            <person name="Schaefer M."/>
            <person name="Mueller-Auer S."/>
            <person name="Gabel C."/>
            <person name="Fuchs M."/>
            <person name="Duesterhoeft A."/>
            <person name="Fritzc C."/>
            <person name="Holzer E."/>
            <person name="Moestl D."/>
            <person name="Hilbert H."/>
            <person name="Borzym K."/>
            <person name="Langer I."/>
            <person name="Beck A."/>
            <person name="Lehrach H."/>
            <person name="Reinhardt R."/>
            <person name="Pohl T.M."/>
            <person name="Eger P."/>
            <person name="Zimmermann W."/>
            <person name="Wedler H."/>
            <person name="Wambutt R."/>
            <person name="Purnelle B."/>
            <person name="Goffeau A."/>
            <person name="Cadieu E."/>
            <person name="Dreano S."/>
            <person name="Gloux S."/>
            <person name="Lelaure V."/>
            <person name="Mottier S."/>
            <person name="Galibert F."/>
            <person name="Aves S.J."/>
            <person name="Xiang Z."/>
            <person name="Hunt C."/>
            <person name="Moore K."/>
            <person name="Hurst S.M."/>
            <person name="Lucas M."/>
            <person name="Rochet M."/>
            <person name="Gaillardin C."/>
            <person name="Tallada V.A."/>
            <person name="Garzon A."/>
            <person name="Thode G."/>
            <person name="Daga R.R."/>
            <person name="Cruzado L."/>
            <person name="Jimenez J."/>
            <person name="Sanchez M."/>
            <person name="del Rey F."/>
            <person name="Benito J."/>
            <person name="Dominguez A."/>
            <person name="Revuelta J.L."/>
            <person name="Moreno S."/>
            <person name="Armstrong J."/>
            <person name="Forsburg S.L."/>
            <person name="Cerutti L."/>
            <person name="Lowe T."/>
            <person name="McCombie W.R."/>
            <person name="Paulsen I."/>
            <person name="Potashkin J."/>
            <person name="Shpakovski G.V."/>
            <person name="Ussery D."/>
            <person name="Barrell B.G."/>
            <person name="Nurse P."/>
        </authorList>
    </citation>
    <scope>NUCLEOTIDE SEQUENCE [LARGE SCALE GENOMIC DNA]</scope>
    <source>
        <strain>972 / ATCC 24843</strain>
    </source>
</reference>
<reference key="2">
    <citation type="journal article" date="2006" name="Nat. Biotechnol.">
        <title>ORFeome cloning and global analysis of protein localization in the fission yeast Schizosaccharomyces pombe.</title>
        <authorList>
            <person name="Matsuyama A."/>
            <person name="Arai R."/>
            <person name="Yashiroda Y."/>
            <person name="Shirai A."/>
            <person name="Kamata A."/>
            <person name="Sekido S."/>
            <person name="Kobayashi Y."/>
            <person name="Hashimoto A."/>
            <person name="Hamamoto M."/>
            <person name="Hiraoka Y."/>
            <person name="Horinouchi S."/>
            <person name="Yoshida M."/>
        </authorList>
    </citation>
    <scope>SUBCELLULAR LOCATION [LARGE SCALE ANALYSIS]</scope>
</reference>
<evidence type="ECO:0000255" key="1">
    <source>
        <dbReference type="PROSITE-ProRule" id="PRU00130"/>
    </source>
</evidence>
<evidence type="ECO:0000256" key="2">
    <source>
        <dbReference type="SAM" id="MobiDB-lite"/>
    </source>
</evidence>
<evidence type="ECO:0000269" key="3">
    <source>
    </source>
</evidence>
<protein>
    <recommendedName>
        <fullName>Uncharacterized protein C18H10.07</fullName>
    </recommendedName>
</protein>
<gene>
    <name type="ORF">SPBC18H10.07</name>
</gene>
<dbReference type="EMBL" id="CU329671">
    <property type="protein sequence ID" value="CAA18404.1"/>
    <property type="molecule type" value="Genomic_DNA"/>
</dbReference>
<dbReference type="PIR" id="T39771">
    <property type="entry name" value="T39771"/>
</dbReference>
<dbReference type="SMR" id="O60138"/>
<dbReference type="BioGRID" id="277172">
    <property type="interactions" value="35"/>
</dbReference>
<dbReference type="FunCoup" id="O60138">
    <property type="interactions" value="22"/>
</dbReference>
<dbReference type="STRING" id="284812.O60138"/>
<dbReference type="PaxDb" id="4896-SPBC18H10.07.1"/>
<dbReference type="EnsemblFungi" id="SPBC18H10.07.1">
    <property type="protein sequence ID" value="SPBC18H10.07.1:pep"/>
    <property type="gene ID" value="SPBC18H10.07"/>
</dbReference>
<dbReference type="KEGG" id="spo:2540647"/>
<dbReference type="PomBase" id="SPBC18H10.07"/>
<dbReference type="VEuPathDB" id="FungiDB:SPBC18H10.07"/>
<dbReference type="eggNOG" id="KOG0150">
    <property type="taxonomic scope" value="Eukaryota"/>
</dbReference>
<dbReference type="HOGENOM" id="CLU_1366948_0_0_1"/>
<dbReference type="InParanoid" id="O60138"/>
<dbReference type="OMA" id="HEQSFKH"/>
<dbReference type="PRO" id="PR:O60138"/>
<dbReference type="Proteomes" id="UP000002485">
    <property type="component" value="Chromosome II"/>
</dbReference>
<dbReference type="GO" id="GO:0005730">
    <property type="term" value="C:nucleolus"/>
    <property type="evidence" value="ECO:0007005"/>
    <property type="project" value="PomBase"/>
</dbReference>
<dbReference type="GO" id="GO:0005634">
    <property type="term" value="C:nucleus"/>
    <property type="evidence" value="ECO:0007005"/>
    <property type="project" value="PomBase"/>
</dbReference>
<dbReference type="GO" id="GO:0071011">
    <property type="term" value="C:precatalytic spliceosome"/>
    <property type="evidence" value="ECO:0000318"/>
    <property type="project" value="GO_Central"/>
</dbReference>
<dbReference type="GO" id="GO:0071005">
    <property type="term" value="C:U2-type precatalytic spliceosome"/>
    <property type="evidence" value="ECO:0000266"/>
    <property type="project" value="PomBase"/>
</dbReference>
<dbReference type="GO" id="GO:0003723">
    <property type="term" value="F:RNA binding"/>
    <property type="evidence" value="ECO:0000318"/>
    <property type="project" value="GO_Central"/>
</dbReference>
<dbReference type="GO" id="GO:0008270">
    <property type="term" value="F:zinc ion binding"/>
    <property type="evidence" value="ECO:0007669"/>
    <property type="project" value="UniProtKB-KW"/>
</dbReference>
<dbReference type="GO" id="GO:0045292">
    <property type="term" value="P:mRNA cis splicing, via spliceosome"/>
    <property type="evidence" value="ECO:0000266"/>
    <property type="project" value="PomBase"/>
</dbReference>
<dbReference type="GO" id="GO:0008380">
    <property type="term" value="P:RNA splicing"/>
    <property type="evidence" value="ECO:0000318"/>
    <property type="project" value="GO_Central"/>
</dbReference>
<dbReference type="FunFam" id="3.30.160.60:FF:003319">
    <property type="entry name" value="U1 zinc finger family protein"/>
    <property type="match status" value="1"/>
</dbReference>
<dbReference type="Gene3D" id="3.30.160.60">
    <property type="entry name" value="Classic Zinc Finger"/>
    <property type="match status" value="1"/>
</dbReference>
<dbReference type="InterPro" id="IPR000690">
    <property type="entry name" value="Matrin/U1-C_Znf_C2H2"/>
</dbReference>
<dbReference type="InterPro" id="IPR003604">
    <property type="entry name" value="Matrin/U1-like-C_Znf_C2H2"/>
</dbReference>
<dbReference type="InterPro" id="IPR013085">
    <property type="entry name" value="U1-CZ_Znf_C2H2"/>
</dbReference>
<dbReference type="InterPro" id="IPR040023">
    <property type="entry name" value="WBP4"/>
</dbReference>
<dbReference type="InterPro" id="IPR036236">
    <property type="entry name" value="Znf_C2H2_sf"/>
</dbReference>
<dbReference type="PANTHER" id="PTHR13173">
    <property type="entry name" value="WW DOMAIN BINDING PROTEIN 4"/>
    <property type="match status" value="1"/>
</dbReference>
<dbReference type="PANTHER" id="PTHR13173:SF10">
    <property type="entry name" value="WW DOMAIN-BINDING PROTEIN 4"/>
    <property type="match status" value="1"/>
</dbReference>
<dbReference type="Pfam" id="PF06220">
    <property type="entry name" value="zf-U1"/>
    <property type="match status" value="1"/>
</dbReference>
<dbReference type="SMART" id="SM00451">
    <property type="entry name" value="ZnF_U1"/>
    <property type="match status" value="1"/>
</dbReference>
<dbReference type="SUPFAM" id="SSF57667">
    <property type="entry name" value="beta-beta-alpha zinc fingers"/>
    <property type="match status" value="1"/>
</dbReference>
<dbReference type="PROSITE" id="PS50171">
    <property type="entry name" value="ZF_MATRIN"/>
    <property type="match status" value="1"/>
</dbReference>
<organism>
    <name type="scientific">Schizosaccharomyces pombe (strain 972 / ATCC 24843)</name>
    <name type="common">Fission yeast</name>
    <dbReference type="NCBI Taxonomy" id="284812"/>
    <lineage>
        <taxon>Eukaryota</taxon>
        <taxon>Fungi</taxon>
        <taxon>Dikarya</taxon>
        <taxon>Ascomycota</taxon>
        <taxon>Taphrinomycotina</taxon>
        <taxon>Schizosaccharomycetes</taxon>
        <taxon>Schizosaccharomycetales</taxon>
        <taxon>Schizosaccharomycetaceae</taxon>
        <taxon>Schizosaccharomyces</taxon>
    </lineage>
</organism>
<sequence length="224" mass="25887">MADYWKSIPKYYCKYCQIFVKDTPFARRSHEQTYKHQDAIKKVMDDIHRSNLLRQELEKNLSIPKSATATTASAVSSELASYEKPKKEHPKLRPSKKKATLDDWDIPTSSTETDTISTTHTSYIPTLLAKQEENEETKETTTNKNESLPGTSLKRNREIIEKEERSSFHFRVKPKNLDKVPKLAENEGNKSLESKESNENKVVFKKKKSGKLRTKSSLKEYDQS</sequence>
<name>YNS7_SCHPO</name>
<proteinExistence type="predicted"/>
<keyword id="KW-0479">Metal-binding</keyword>
<keyword id="KW-0539">Nucleus</keyword>
<keyword id="KW-1185">Reference proteome</keyword>
<keyword id="KW-0862">Zinc</keyword>
<keyword id="KW-0863">Zinc-finger</keyword>
<feature type="chain" id="PRO_0000342265" description="Uncharacterized protein C18H10.07">
    <location>
        <begin position="1"/>
        <end position="224"/>
    </location>
</feature>
<feature type="zinc finger region" description="Matrin-type" evidence="1">
    <location>
        <begin position="11"/>
        <end position="42"/>
    </location>
</feature>
<feature type="region of interest" description="Disordered" evidence="2">
    <location>
        <begin position="67"/>
        <end position="158"/>
    </location>
</feature>
<feature type="region of interest" description="Disordered" evidence="2">
    <location>
        <begin position="172"/>
        <end position="224"/>
    </location>
</feature>
<feature type="compositionally biased region" description="Low complexity" evidence="2">
    <location>
        <begin position="67"/>
        <end position="80"/>
    </location>
</feature>
<feature type="compositionally biased region" description="Basic residues" evidence="2">
    <location>
        <begin position="87"/>
        <end position="98"/>
    </location>
</feature>
<feature type="compositionally biased region" description="Low complexity" evidence="2">
    <location>
        <begin position="108"/>
        <end position="122"/>
    </location>
</feature>
<feature type="compositionally biased region" description="Basic and acidic residues" evidence="2">
    <location>
        <begin position="175"/>
        <end position="199"/>
    </location>
</feature>
<feature type="compositionally biased region" description="Basic residues" evidence="2">
    <location>
        <begin position="203"/>
        <end position="216"/>
    </location>
</feature>
<accession>O60138</accession>
<comment type="subcellular location">
    <subcellularLocation>
        <location evidence="3">Nucleus</location>
        <location evidence="3">Nucleolus</location>
    </subcellularLocation>
</comment>